<comment type="function">
    <text evidence="1">NAD-binding protein involved in the addition of a carboxymethylaminomethyl (cmnm) group at the wobble position (U34) of certain tRNAs, forming tRNA-cmnm(5)s(2)U34.</text>
</comment>
<comment type="cofactor">
    <cofactor evidence="1">
        <name>FAD</name>
        <dbReference type="ChEBI" id="CHEBI:57692"/>
    </cofactor>
</comment>
<comment type="subunit">
    <text evidence="1">Homodimer. Heterotetramer of two MnmE and two MnmG subunits.</text>
</comment>
<comment type="subcellular location">
    <subcellularLocation>
        <location evidence="1">Cytoplasm</location>
    </subcellularLocation>
</comment>
<comment type="similarity">
    <text evidence="1">Belongs to the MnmG family.</text>
</comment>
<dbReference type="EMBL" id="BA000045">
    <property type="protein sequence ID" value="BAC88822.1"/>
    <property type="molecule type" value="Genomic_DNA"/>
</dbReference>
<dbReference type="RefSeq" id="NP_923827.1">
    <property type="nucleotide sequence ID" value="NC_005125.1"/>
</dbReference>
<dbReference type="RefSeq" id="WP_011140883.1">
    <property type="nucleotide sequence ID" value="NC_005125.1"/>
</dbReference>
<dbReference type="SMR" id="Q7NM86"/>
<dbReference type="STRING" id="251221.gene:10758359"/>
<dbReference type="EnsemblBacteria" id="BAC88822">
    <property type="protein sequence ID" value="BAC88822"/>
    <property type="gene ID" value="BAC88822"/>
</dbReference>
<dbReference type="KEGG" id="gvi:gll0881"/>
<dbReference type="PATRIC" id="fig|251221.4.peg.899"/>
<dbReference type="eggNOG" id="COG0445">
    <property type="taxonomic scope" value="Bacteria"/>
</dbReference>
<dbReference type="HOGENOM" id="CLU_007831_2_2_3"/>
<dbReference type="InParanoid" id="Q7NM86"/>
<dbReference type="OrthoDB" id="9815560at2"/>
<dbReference type="PhylomeDB" id="Q7NM86"/>
<dbReference type="Proteomes" id="UP000000557">
    <property type="component" value="Chromosome"/>
</dbReference>
<dbReference type="GO" id="GO:0005737">
    <property type="term" value="C:cytoplasm"/>
    <property type="evidence" value="ECO:0007669"/>
    <property type="project" value="UniProtKB-SubCell"/>
</dbReference>
<dbReference type="GO" id="GO:0050660">
    <property type="term" value="F:flavin adenine dinucleotide binding"/>
    <property type="evidence" value="ECO:0000318"/>
    <property type="project" value="GO_Central"/>
</dbReference>
<dbReference type="GO" id="GO:0030488">
    <property type="term" value="P:tRNA methylation"/>
    <property type="evidence" value="ECO:0000318"/>
    <property type="project" value="GO_Central"/>
</dbReference>
<dbReference type="GO" id="GO:0002098">
    <property type="term" value="P:tRNA wobble uridine modification"/>
    <property type="evidence" value="ECO:0000318"/>
    <property type="project" value="GO_Central"/>
</dbReference>
<dbReference type="FunFam" id="1.10.150.570:FF:000001">
    <property type="entry name" value="tRNA uridine 5-carboxymethylaminomethyl modification enzyme MnmG"/>
    <property type="match status" value="1"/>
</dbReference>
<dbReference type="FunFam" id="3.50.50.60:FF:000094">
    <property type="entry name" value="tRNA uridine 5-carboxymethylaminomethyl modification enzyme MnmG"/>
    <property type="match status" value="1"/>
</dbReference>
<dbReference type="FunFam" id="3.50.50.60:FF:000119">
    <property type="entry name" value="tRNA uridine 5-carboxymethylaminomethyl modification enzyme MnmG"/>
    <property type="match status" value="1"/>
</dbReference>
<dbReference type="Gene3D" id="3.50.50.60">
    <property type="entry name" value="FAD/NAD(P)-binding domain"/>
    <property type="match status" value="2"/>
</dbReference>
<dbReference type="Gene3D" id="1.10.150.570">
    <property type="entry name" value="GidA associated domain, C-terminal subdomain"/>
    <property type="match status" value="1"/>
</dbReference>
<dbReference type="Gene3D" id="1.10.10.1800">
    <property type="entry name" value="tRNA uridine 5-carboxymethylaminomethyl modification enzyme MnmG/GidA"/>
    <property type="match status" value="1"/>
</dbReference>
<dbReference type="HAMAP" id="MF_00129">
    <property type="entry name" value="MnmG_GidA"/>
    <property type="match status" value="1"/>
</dbReference>
<dbReference type="InterPro" id="IPR036188">
    <property type="entry name" value="FAD/NAD-bd_sf"/>
</dbReference>
<dbReference type="InterPro" id="IPR049312">
    <property type="entry name" value="GIDA_C_N"/>
</dbReference>
<dbReference type="InterPro" id="IPR004416">
    <property type="entry name" value="MnmG"/>
</dbReference>
<dbReference type="InterPro" id="IPR002218">
    <property type="entry name" value="MnmG-rel"/>
</dbReference>
<dbReference type="InterPro" id="IPR020595">
    <property type="entry name" value="MnmG-rel_CS"/>
</dbReference>
<dbReference type="InterPro" id="IPR026904">
    <property type="entry name" value="MnmG_C"/>
</dbReference>
<dbReference type="InterPro" id="IPR047001">
    <property type="entry name" value="MnmG_C_subdom"/>
</dbReference>
<dbReference type="InterPro" id="IPR044920">
    <property type="entry name" value="MnmG_C_subdom_sf"/>
</dbReference>
<dbReference type="InterPro" id="IPR040131">
    <property type="entry name" value="MnmG_N"/>
</dbReference>
<dbReference type="NCBIfam" id="TIGR00136">
    <property type="entry name" value="mnmG_gidA"/>
    <property type="match status" value="1"/>
</dbReference>
<dbReference type="PANTHER" id="PTHR11806">
    <property type="entry name" value="GLUCOSE INHIBITED DIVISION PROTEIN A"/>
    <property type="match status" value="1"/>
</dbReference>
<dbReference type="PANTHER" id="PTHR11806:SF0">
    <property type="entry name" value="PROTEIN MTO1 HOMOLOG, MITOCHONDRIAL"/>
    <property type="match status" value="1"/>
</dbReference>
<dbReference type="Pfam" id="PF01134">
    <property type="entry name" value="GIDA"/>
    <property type="match status" value="1"/>
</dbReference>
<dbReference type="Pfam" id="PF21680">
    <property type="entry name" value="GIDA_C_1st"/>
    <property type="match status" value="1"/>
</dbReference>
<dbReference type="Pfam" id="PF13932">
    <property type="entry name" value="SAM_GIDA_C"/>
    <property type="match status" value="1"/>
</dbReference>
<dbReference type="SMART" id="SM01228">
    <property type="entry name" value="GIDA_assoc_3"/>
    <property type="match status" value="1"/>
</dbReference>
<dbReference type="SUPFAM" id="SSF51905">
    <property type="entry name" value="FAD/NAD(P)-binding domain"/>
    <property type="match status" value="1"/>
</dbReference>
<dbReference type="PROSITE" id="PS01280">
    <property type="entry name" value="GIDA_1"/>
    <property type="match status" value="1"/>
</dbReference>
<dbReference type="PROSITE" id="PS01281">
    <property type="entry name" value="GIDA_2"/>
    <property type="match status" value="1"/>
</dbReference>
<feature type="chain" id="PRO_0000345275" description="tRNA uridine 5-carboxymethylaminomethyl modification enzyme MnmG">
    <location>
        <begin position="1"/>
        <end position="656"/>
    </location>
</feature>
<feature type="binding site" evidence="1">
    <location>
        <begin position="44"/>
        <end position="49"/>
    </location>
    <ligand>
        <name>FAD</name>
        <dbReference type="ChEBI" id="CHEBI:57692"/>
    </ligand>
</feature>
<feature type="binding site" evidence="1">
    <location>
        <begin position="305"/>
        <end position="319"/>
    </location>
    <ligand>
        <name>NAD(+)</name>
        <dbReference type="ChEBI" id="CHEBI:57540"/>
    </ligand>
</feature>
<accession>Q7NM86</accession>
<organism>
    <name type="scientific">Gloeobacter violaceus (strain ATCC 29082 / PCC 7421)</name>
    <dbReference type="NCBI Taxonomy" id="251221"/>
    <lineage>
        <taxon>Bacteria</taxon>
        <taxon>Bacillati</taxon>
        <taxon>Cyanobacteriota</taxon>
        <taxon>Cyanophyceae</taxon>
        <taxon>Gloeobacterales</taxon>
        <taxon>Gloeobacteraceae</taxon>
        <taxon>Gloeobacter</taxon>
    </lineage>
</organism>
<sequence>MSCLPDWLAAGCRDGDAASHPTIRLRFRTATVHYLAEFDVVVVGAGHSGCEAALAAARLGCRTLLVTMNLDTIAWQPCNPAVGGPAKSQLVHEVDALGGEMAKITDRTYLQKRVLNSSRGPAVWALRAQTDKREYARELKQVLEATPNLTLRQGQITDIHLGPHDEICGVGTFFDVHFACRAVILTTGTFLGGRIWIGRKSMSAGRAGEFAAEGLTATLERLGFETGRLKTGTPARVDRRTVDFGVMEVQPPDPELRWFSFDPRAWVEREQLNCYLTRTTAATHQVIRDHLHLSPMYSGDIEARGPRYCPSIEDKIVRFADKESHQIFIEPEGRDTPELYVQGFSTSLPETVQIAMLRTLPGLEACAVLRPAYAVEYDYLPATQCYATLMTKRVEGLFCAGQINGTTGYEEAAAQGIVAGINAARLVRGEALVILPREGSYIGTLIDDLVTKEIREPYRMLTSRSEYRLVLRSDNADRRLTPLGREIGLVDDERWGLYQKKIAAITCERQRLETTRLNARDLPVHLAAKPGSITLADLLRRPGLHYGDLESLNQGVLLDAQVREGVEIEVKYSGYIERQNEQIERVSAQHARVIPADLDYERLSTLSKESREKLNRIRPRTIGQAGRIGGVNPADVSALLVYLELAQAGRLTPAAP</sequence>
<name>MNMG_GLOVI</name>
<keyword id="KW-0963">Cytoplasm</keyword>
<keyword id="KW-0274">FAD</keyword>
<keyword id="KW-0285">Flavoprotein</keyword>
<keyword id="KW-0520">NAD</keyword>
<keyword id="KW-1185">Reference proteome</keyword>
<keyword id="KW-0819">tRNA processing</keyword>
<reference key="1">
    <citation type="journal article" date="2003" name="DNA Res.">
        <title>Complete genome structure of Gloeobacter violaceus PCC 7421, a cyanobacterium that lacks thylakoids.</title>
        <authorList>
            <person name="Nakamura Y."/>
            <person name="Kaneko T."/>
            <person name="Sato S."/>
            <person name="Mimuro M."/>
            <person name="Miyashita H."/>
            <person name="Tsuchiya T."/>
            <person name="Sasamoto S."/>
            <person name="Watanabe A."/>
            <person name="Kawashima K."/>
            <person name="Kishida Y."/>
            <person name="Kiyokawa C."/>
            <person name="Kohara M."/>
            <person name="Matsumoto M."/>
            <person name="Matsuno A."/>
            <person name="Nakazaki N."/>
            <person name="Shimpo S."/>
            <person name="Takeuchi C."/>
            <person name="Yamada M."/>
            <person name="Tabata S."/>
        </authorList>
    </citation>
    <scope>NUCLEOTIDE SEQUENCE [LARGE SCALE GENOMIC DNA]</scope>
    <source>
        <strain>ATCC 29082 / PCC 7421</strain>
    </source>
</reference>
<protein>
    <recommendedName>
        <fullName evidence="1">tRNA uridine 5-carboxymethylaminomethyl modification enzyme MnmG</fullName>
    </recommendedName>
    <alternativeName>
        <fullName evidence="1">Glucose-inhibited division protein A</fullName>
    </alternativeName>
</protein>
<proteinExistence type="inferred from homology"/>
<evidence type="ECO:0000255" key="1">
    <source>
        <dbReference type="HAMAP-Rule" id="MF_00129"/>
    </source>
</evidence>
<gene>
    <name evidence="1" type="primary">mnmG</name>
    <name evidence="1" type="synonym">gidA</name>
    <name type="ordered locus">gll0881</name>
</gene>